<dbReference type="EMBL" id="L00725">
    <property type="protein sequence ID" value="AAA28416.1"/>
    <property type="molecule type" value="Genomic_DNA"/>
</dbReference>
<dbReference type="SMR" id="Q02638"/>
<dbReference type="eggNOG" id="KOG3119">
    <property type="taxonomic scope" value="Eukaryota"/>
</dbReference>
<dbReference type="OrthoDB" id="10032067at2759"/>
<dbReference type="GO" id="GO:0005634">
    <property type="term" value="C:nucleus"/>
    <property type="evidence" value="ECO:0007669"/>
    <property type="project" value="UniProtKB-SubCell"/>
</dbReference>
<dbReference type="GO" id="GO:0000981">
    <property type="term" value="F:DNA-binding transcription factor activity, RNA polymerase II-specific"/>
    <property type="evidence" value="ECO:0007669"/>
    <property type="project" value="TreeGrafter"/>
</dbReference>
<dbReference type="GO" id="GO:0000978">
    <property type="term" value="F:RNA polymerase II cis-regulatory region sequence-specific DNA binding"/>
    <property type="evidence" value="ECO:0007669"/>
    <property type="project" value="TreeGrafter"/>
</dbReference>
<dbReference type="GO" id="GO:0007298">
    <property type="term" value="P:border follicle cell migration"/>
    <property type="evidence" value="ECO:0007669"/>
    <property type="project" value="EnsemblMetazoa"/>
</dbReference>
<dbReference type="GO" id="GO:0006351">
    <property type="term" value="P:DNA-templated transcription"/>
    <property type="evidence" value="ECO:0007669"/>
    <property type="project" value="InterPro"/>
</dbReference>
<dbReference type="GO" id="GO:1903688">
    <property type="term" value="P:positive regulation of border follicle cell migration"/>
    <property type="evidence" value="ECO:0007669"/>
    <property type="project" value="EnsemblMetazoa"/>
</dbReference>
<dbReference type="GO" id="GO:0045944">
    <property type="term" value="P:positive regulation of transcription by RNA polymerase II"/>
    <property type="evidence" value="ECO:0007669"/>
    <property type="project" value="EnsemblMetazoa"/>
</dbReference>
<dbReference type="CDD" id="cd14693">
    <property type="entry name" value="bZIP_CEBP"/>
    <property type="match status" value="1"/>
</dbReference>
<dbReference type="Gene3D" id="1.20.5.170">
    <property type="match status" value="1"/>
</dbReference>
<dbReference type="InterPro" id="IPR004827">
    <property type="entry name" value="bZIP"/>
</dbReference>
<dbReference type="InterPro" id="IPR046347">
    <property type="entry name" value="bZIP_sf"/>
</dbReference>
<dbReference type="InterPro" id="IPR031106">
    <property type="entry name" value="C/EBP"/>
</dbReference>
<dbReference type="PANTHER" id="PTHR23334">
    <property type="entry name" value="CCAAT/ENHANCER BINDING PROTEIN"/>
    <property type="match status" value="1"/>
</dbReference>
<dbReference type="PANTHER" id="PTHR23334:SF69">
    <property type="entry name" value="CCAAT_ENHANCER-BINDING PROTEIN GAMMA"/>
    <property type="match status" value="1"/>
</dbReference>
<dbReference type="Pfam" id="PF07716">
    <property type="entry name" value="bZIP_2"/>
    <property type="match status" value="1"/>
</dbReference>
<dbReference type="SMART" id="SM00338">
    <property type="entry name" value="BRLZ"/>
    <property type="match status" value="1"/>
</dbReference>
<dbReference type="SUPFAM" id="SSF57959">
    <property type="entry name" value="Leucine zipper domain"/>
    <property type="match status" value="1"/>
</dbReference>
<dbReference type="PROSITE" id="PS50217">
    <property type="entry name" value="BZIP"/>
    <property type="match status" value="1"/>
</dbReference>
<reference key="1">
    <citation type="journal article" date="1992" name="Cell">
        <title>Slow border cells, a locus required for a developmentally regulated cell migration during oogenesis, encodes Drosophila C/EBP.</title>
        <authorList>
            <person name="Montell D.J."/>
            <person name="Rorth P."/>
            <person name="Spradling A.C."/>
        </authorList>
    </citation>
    <scope>NUCLEOTIDE SEQUENCE [GENOMIC DNA]</scope>
</reference>
<proteinExistence type="inferred from homology"/>
<sequence length="451" mass="50801">MLNMESPQMYADAVQTLAHVDLKKQPQPLPQQATIGQITLTAMSSAQQQQQQQQQQQQQQQQQQQQQQQVTTDANNNATVQDAALLVKQHAMQQMQLSNNNSNNLLQKQMLQQYSTQTDLDELTTQEITLDLQHLIDDQFRDTETLGIFSDMVTSPGGLSATLPPSGMVSAAAKVLQQQQQTLANARQQQHSYGRAALAYMRQAVHSNATYNNHSSDENSSVGSDSSSTIKEEPIDPDYRRHLQESVTGQAAAAFINNSNGLYNAYQSNNLSNNNSSSNNSSNNSSNNSSNSNTNSTNAAQFTNLTTANVLAHHSLPHLTANTAQQLLKHHSKLQQTQQQHAQQQQQHAQQQHRKHSNKHVDKGTEEYRRRRERNNIAVRKSREKAKVRSKEVEERVKSLLKEKDALLRQLSEMTNELSLHKQIYMQLMNHTNPEVSRVCRSFLNTNEHAL</sequence>
<evidence type="ECO:0000255" key="1">
    <source>
        <dbReference type="PROSITE-ProRule" id="PRU00978"/>
    </source>
</evidence>
<evidence type="ECO:0000256" key="2">
    <source>
        <dbReference type="SAM" id="MobiDB-lite"/>
    </source>
</evidence>
<evidence type="ECO:0000305" key="3"/>
<keyword id="KW-0010">Activator</keyword>
<keyword id="KW-0238">DNA-binding</keyword>
<keyword id="KW-0539">Nucleus</keyword>
<keyword id="KW-0804">Transcription</keyword>
<keyword id="KW-0805">Transcription regulation</keyword>
<feature type="chain" id="PRO_0000076632" description="CCAAT/enhancer-binding protein">
    <location>
        <begin position="1"/>
        <end position="451"/>
    </location>
</feature>
<feature type="domain" description="bZIP" evidence="1">
    <location>
        <begin position="365"/>
        <end position="428"/>
    </location>
</feature>
<feature type="region of interest" description="Disordered" evidence="2">
    <location>
        <begin position="210"/>
        <end position="236"/>
    </location>
</feature>
<feature type="region of interest" description="Disordered" evidence="2">
    <location>
        <begin position="267"/>
        <end position="298"/>
    </location>
</feature>
<feature type="region of interest" description="Disordered" evidence="2">
    <location>
        <begin position="328"/>
        <end position="389"/>
    </location>
</feature>
<feature type="region of interest" description="Basic motif" evidence="1">
    <location>
        <begin position="369"/>
        <end position="398"/>
    </location>
</feature>
<feature type="region of interest" description="Leucine-zipper" evidence="1">
    <location>
        <begin position="400"/>
        <end position="407"/>
    </location>
</feature>
<feature type="compositionally biased region" description="Low complexity" evidence="2">
    <location>
        <begin position="218"/>
        <end position="228"/>
    </location>
</feature>
<feature type="compositionally biased region" description="Low complexity" evidence="2">
    <location>
        <begin position="268"/>
        <end position="298"/>
    </location>
</feature>
<feature type="compositionally biased region" description="Low complexity" evidence="2">
    <location>
        <begin position="334"/>
        <end position="350"/>
    </location>
</feature>
<feature type="compositionally biased region" description="Basic and acidic residues" evidence="2">
    <location>
        <begin position="359"/>
        <end position="370"/>
    </location>
</feature>
<comment type="function">
    <text>May be required for the expression of gene products mediating border cell migration. Among the DNA sequences that this protein binds with high affinity is a conserved site within the promoter of its gene.</text>
</comment>
<comment type="subunit">
    <text>Binds DNA as a dimer and can form stable heterodimers.</text>
</comment>
<comment type="subcellular location">
    <subcellularLocation>
        <location>Nucleus</location>
    </subcellularLocation>
</comment>
<comment type="similarity">
    <text evidence="3">Belongs to the bZIP family. C/EBP subfamily.</text>
</comment>
<organism>
    <name type="scientific">Drosophila virilis</name>
    <name type="common">Fruit fly</name>
    <dbReference type="NCBI Taxonomy" id="7244"/>
    <lineage>
        <taxon>Eukaryota</taxon>
        <taxon>Metazoa</taxon>
        <taxon>Ecdysozoa</taxon>
        <taxon>Arthropoda</taxon>
        <taxon>Hexapoda</taxon>
        <taxon>Insecta</taxon>
        <taxon>Pterygota</taxon>
        <taxon>Neoptera</taxon>
        <taxon>Endopterygota</taxon>
        <taxon>Diptera</taxon>
        <taxon>Brachycera</taxon>
        <taxon>Muscomorpha</taxon>
        <taxon>Ephydroidea</taxon>
        <taxon>Drosophilidae</taxon>
        <taxon>Drosophila</taxon>
    </lineage>
</organism>
<name>CEBP_DROVI</name>
<gene>
    <name type="primary">slbo</name>
</gene>
<protein>
    <recommendedName>
        <fullName>CCAAT/enhancer-binding protein</fullName>
        <shortName>C/EBP</shortName>
    </recommendedName>
    <alternativeName>
        <fullName>Slow border cell protein</fullName>
    </alternativeName>
</protein>
<accession>Q02638</accession>